<reference key="1">
    <citation type="journal article" date="1994" name="J. Mol. Biol.">
        <title>Complete sequence of the mitochondrial DNA of the chlorophyte alga Prototheca wickerhamii. Gene content and genome organization.</title>
        <authorList>
            <person name="Wolff G."/>
            <person name="Plante I."/>
            <person name="Lang B.F."/>
            <person name="Kueck U."/>
            <person name="Burger G."/>
        </authorList>
    </citation>
    <scope>NUCLEOTIDE SEQUENCE [GENOMIC DNA]</scope>
    <source>
        <strain>263-11</strain>
    </source>
</reference>
<feature type="chain" id="PRO_0000130318" description="Small ribosomal subunit protein uS3m">
    <location>
        <begin position="1"/>
        <end position="500"/>
    </location>
</feature>
<keyword id="KW-0496">Mitochondrion</keyword>
<keyword id="KW-0687">Ribonucleoprotein</keyword>
<keyword id="KW-0689">Ribosomal protein</keyword>
<protein>
    <recommendedName>
        <fullName evidence="1">Small ribosomal subunit protein uS3m</fullName>
    </recommendedName>
    <alternativeName>
        <fullName>Ribosomal protein S3, mitochondrial</fullName>
    </alternativeName>
</protein>
<name>RT03_PROWI</name>
<geneLocation type="mitochondrion"/>
<proteinExistence type="inferred from homology"/>
<organism>
    <name type="scientific">Prototheca wickerhamii</name>
    <dbReference type="NCBI Taxonomy" id="3111"/>
    <lineage>
        <taxon>Eukaryota</taxon>
        <taxon>Viridiplantae</taxon>
        <taxon>Chlorophyta</taxon>
        <taxon>core chlorophytes</taxon>
        <taxon>Trebouxiophyceae</taxon>
        <taxon>Chlorellales</taxon>
        <taxon>Chlorellaceae</taxon>
        <taxon>Prototheca</taxon>
    </lineage>
</organism>
<sequence length="500" mass="58109">MGQKTNPISLRLQNVNRNFDSCWYSDYFYAKCFSRDLYLNNYINTFFKLYRLPQARVCVNFGIQNIKVYPFFCIPKASRVSLAKNLGLFQHLSKAWNSSPKYFVSSKSKQLSQLKINDASLPVNNLNNNLFFNSSKHNEIRNKQNFFHNLELNKLNLSFKNSAYSDVKNYSFLENISAKLLLNFKEKSVINEVYYTTTNLGQIGNNISTNSIYSKQDMSDNSSKSLLKMLLREYYKSSDNKSSILYENKSPKSLENIFGKINEVSNINKKNLYLLNSETDNIPNLYKRKSKPTKFLRNEHNKVIEDKKTSLYFMPDSNQIKNDIYQGKISKISSISNNSKDSLTDYNLHLYQAYLHNILGNSKSLVSRNQFKYKNYIENFLSSQYNIDSQLFPFISKQNWQSAGFIADEIVYFIERRVSFSRIKNRILRQASMQSYVRGIRITCSGRVGGKSKKAQRATQECVKYGETSLHVFECKIDFASRIANTSFGLVGIKVWICFK</sequence>
<dbReference type="EMBL" id="U02970">
    <property type="protein sequence ID" value="AAD12665.1"/>
    <property type="molecule type" value="Genomic_DNA"/>
</dbReference>
<dbReference type="PIR" id="T11946">
    <property type="entry name" value="T11946"/>
</dbReference>
<dbReference type="RefSeq" id="NP_042277.1">
    <property type="nucleotide sequence ID" value="NC_001613.1"/>
</dbReference>
<dbReference type="GeneID" id="802132"/>
<dbReference type="GO" id="GO:0005739">
    <property type="term" value="C:mitochondrion"/>
    <property type="evidence" value="ECO:0007669"/>
    <property type="project" value="UniProtKB-SubCell"/>
</dbReference>
<dbReference type="GO" id="GO:1990904">
    <property type="term" value="C:ribonucleoprotein complex"/>
    <property type="evidence" value="ECO:0007669"/>
    <property type="project" value="UniProtKB-KW"/>
</dbReference>
<dbReference type="GO" id="GO:0005840">
    <property type="term" value="C:ribosome"/>
    <property type="evidence" value="ECO:0007669"/>
    <property type="project" value="UniProtKB-KW"/>
</dbReference>
<dbReference type="GO" id="GO:0003723">
    <property type="term" value="F:RNA binding"/>
    <property type="evidence" value="ECO:0007669"/>
    <property type="project" value="InterPro"/>
</dbReference>
<dbReference type="GO" id="GO:0003735">
    <property type="term" value="F:structural constituent of ribosome"/>
    <property type="evidence" value="ECO:0007669"/>
    <property type="project" value="InterPro"/>
</dbReference>
<dbReference type="GO" id="GO:0006412">
    <property type="term" value="P:translation"/>
    <property type="evidence" value="ECO:0007669"/>
    <property type="project" value="InterPro"/>
</dbReference>
<dbReference type="Gene3D" id="3.30.1140.32">
    <property type="entry name" value="Ribosomal protein S3, C-terminal domain"/>
    <property type="match status" value="1"/>
</dbReference>
<dbReference type="InterPro" id="IPR009019">
    <property type="entry name" value="KH_sf_prok-type"/>
</dbReference>
<dbReference type="InterPro" id="IPR036419">
    <property type="entry name" value="Ribosomal_S3_C_sf"/>
</dbReference>
<dbReference type="InterPro" id="IPR001351">
    <property type="entry name" value="Ribosomal_uS3_C"/>
</dbReference>
<dbReference type="InterPro" id="IPR044954">
    <property type="entry name" value="Ribosomal_uS3m_plant"/>
</dbReference>
<dbReference type="PANTHER" id="PTHR35928">
    <property type="entry name" value="RIBOSOMAL PROTEIN S3, MITOCHONDRIAL"/>
    <property type="match status" value="1"/>
</dbReference>
<dbReference type="PANTHER" id="PTHR35928:SF2">
    <property type="entry name" value="SMALL RIBOSOMAL SUBUNIT PROTEIN US3M"/>
    <property type="match status" value="1"/>
</dbReference>
<dbReference type="Pfam" id="PF00189">
    <property type="entry name" value="Ribosomal_S3_C"/>
    <property type="match status" value="1"/>
</dbReference>
<dbReference type="SUPFAM" id="SSF54814">
    <property type="entry name" value="Prokaryotic type KH domain (KH-domain type II)"/>
    <property type="match status" value="1"/>
</dbReference>
<dbReference type="SUPFAM" id="SSF54821">
    <property type="entry name" value="Ribosomal protein S3 C-terminal domain"/>
    <property type="match status" value="1"/>
</dbReference>
<evidence type="ECO:0000305" key="1"/>
<gene>
    <name type="primary">RPS3</name>
</gene>
<comment type="subcellular location">
    <subcellularLocation>
        <location>Mitochondrion</location>
    </subcellularLocation>
</comment>
<comment type="similarity">
    <text evidence="1">Belongs to the universal ribosomal protein uS3 family.</text>
</comment>
<accession>P46740</accession>